<feature type="chain" id="PRO_0000301445" description="UDP-N-acetylmuramoylalanine--D-glutamate ligase">
    <location>
        <begin position="1"/>
        <end position="455"/>
    </location>
</feature>
<feature type="binding site" evidence="1">
    <location>
        <begin position="120"/>
        <end position="126"/>
    </location>
    <ligand>
        <name>ATP</name>
        <dbReference type="ChEBI" id="CHEBI:30616"/>
    </ligand>
</feature>
<name>MURD_PEDPA</name>
<sequence length="455" mass="50467">MKSVEDLEDKNVLVLGMAKSGISAALLLHRLRANVLVNDANANQPQELIEKLENKGIRMVLGEHPTNILSQNKIELIVKNPGIPYTNPVLVDAQARGIKIVSEPELAYWVMDSELIGVTGSNGKTTVTTLIQLMLDDNKKHAYVAGNIGVPATTVAQKATAEDKIVMELSSFMLAGIDRLHPHIAVLNNIFASHLDWHKTRENYVNDKMNITKNQTKDDFLVINWDNTEWQELAKRTQAKVVPFSRQGLTKSGAYEIEGKLYFKDELIMEADEIGIPGEQNVENALAAIAVAKIEKVSTAHIKQVLTTFGGVKHRIQYVENLNGRQFYNDSKATDIEATQVALRSFKKPVILIAGGLDRHDDLDRLIPDLEPNVKEVIVNGETAEKFKKIAQKAGISVIKDSSRVSESVEIAYQDSKEGDIILLSPAAASWDQYKTFEERGDEFIAAVQNLHKGE</sequence>
<comment type="function">
    <text evidence="1">Cell wall formation. Catalyzes the addition of glutamate to the nucleotide precursor UDP-N-acetylmuramoyl-L-alanine (UMA).</text>
</comment>
<comment type="catalytic activity">
    <reaction evidence="1">
        <text>UDP-N-acetyl-alpha-D-muramoyl-L-alanine + D-glutamate + ATP = UDP-N-acetyl-alpha-D-muramoyl-L-alanyl-D-glutamate + ADP + phosphate + H(+)</text>
        <dbReference type="Rhea" id="RHEA:16429"/>
        <dbReference type="ChEBI" id="CHEBI:15378"/>
        <dbReference type="ChEBI" id="CHEBI:29986"/>
        <dbReference type="ChEBI" id="CHEBI:30616"/>
        <dbReference type="ChEBI" id="CHEBI:43474"/>
        <dbReference type="ChEBI" id="CHEBI:83898"/>
        <dbReference type="ChEBI" id="CHEBI:83900"/>
        <dbReference type="ChEBI" id="CHEBI:456216"/>
        <dbReference type="EC" id="6.3.2.9"/>
    </reaction>
</comment>
<comment type="pathway">
    <text evidence="1">Cell wall biogenesis; peptidoglycan biosynthesis.</text>
</comment>
<comment type="subcellular location">
    <subcellularLocation>
        <location evidence="1">Cytoplasm</location>
    </subcellularLocation>
</comment>
<comment type="similarity">
    <text evidence="1">Belongs to the MurCDEF family.</text>
</comment>
<organism>
    <name type="scientific">Pediococcus pentosaceus (strain ATCC 25745 / CCUG 21536 / LMG 10740 / 183-1w)</name>
    <dbReference type="NCBI Taxonomy" id="278197"/>
    <lineage>
        <taxon>Bacteria</taxon>
        <taxon>Bacillati</taxon>
        <taxon>Bacillota</taxon>
        <taxon>Bacilli</taxon>
        <taxon>Lactobacillales</taxon>
        <taxon>Lactobacillaceae</taxon>
        <taxon>Pediococcus</taxon>
    </lineage>
</organism>
<keyword id="KW-0067">ATP-binding</keyword>
<keyword id="KW-0131">Cell cycle</keyword>
<keyword id="KW-0132">Cell division</keyword>
<keyword id="KW-0133">Cell shape</keyword>
<keyword id="KW-0961">Cell wall biogenesis/degradation</keyword>
<keyword id="KW-0963">Cytoplasm</keyword>
<keyword id="KW-0436">Ligase</keyword>
<keyword id="KW-0547">Nucleotide-binding</keyword>
<keyword id="KW-0573">Peptidoglycan synthesis</keyword>
<reference key="1">
    <citation type="journal article" date="2006" name="Proc. Natl. Acad. Sci. U.S.A.">
        <title>Comparative genomics of the lactic acid bacteria.</title>
        <authorList>
            <person name="Makarova K.S."/>
            <person name="Slesarev A."/>
            <person name="Wolf Y.I."/>
            <person name="Sorokin A."/>
            <person name="Mirkin B."/>
            <person name="Koonin E.V."/>
            <person name="Pavlov A."/>
            <person name="Pavlova N."/>
            <person name="Karamychev V."/>
            <person name="Polouchine N."/>
            <person name="Shakhova V."/>
            <person name="Grigoriev I."/>
            <person name="Lou Y."/>
            <person name="Rohksar D."/>
            <person name="Lucas S."/>
            <person name="Huang K."/>
            <person name="Goodstein D.M."/>
            <person name="Hawkins T."/>
            <person name="Plengvidhya V."/>
            <person name="Welker D."/>
            <person name="Hughes J."/>
            <person name="Goh Y."/>
            <person name="Benson A."/>
            <person name="Baldwin K."/>
            <person name="Lee J.-H."/>
            <person name="Diaz-Muniz I."/>
            <person name="Dosti B."/>
            <person name="Smeianov V."/>
            <person name="Wechter W."/>
            <person name="Barabote R."/>
            <person name="Lorca G."/>
            <person name="Altermann E."/>
            <person name="Barrangou R."/>
            <person name="Ganesan B."/>
            <person name="Xie Y."/>
            <person name="Rawsthorne H."/>
            <person name="Tamir D."/>
            <person name="Parker C."/>
            <person name="Breidt F."/>
            <person name="Broadbent J.R."/>
            <person name="Hutkins R."/>
            <person name="O'Sullivan D."/>
            <person name="Steele J."/>
            <person name="Unlu G."/>
            <person name="Saier M.H. Jr."/>
            <person name="Klaenhammer T."/>
            <person name="Richardson P."/>
            <person name="Kozyavkin S."/>
            <person name="Weimer B.C."/>
            <person name="Mills D.A."/>
        </authorList>
    </citation>
    <scope>NUCLEOTIDE SEQUENCE [LARGE SCALE GENOMIC DNA]</scope>
    <source>
        <strain>ATCC 25745 / CCUG 21536 / LMG 10740 / 183-1w</strain>
    </source>
</reference>
<protein>
    <recommendedName>
        <fullName evidence="1">UDP-N-acetylmuramoylalanine--D-glutamate ligase</fullName>
        <ecNumber evidence="1">6.3.2.9</ecNumber>
    </recommendedName>
    <alternativeName>
        <fullName evidence="1">D-glutamic acid-adding enzyme</fullName>
    </alternativeName>
    <alternativeName>
        <fullName evidence="1">UDP-N-acetylmuramoyl-L-alanyl-D-glutamate synthetase</fullName>
    </alternativeName>
</protein>
<accession>Q03EY1</accession>
<gene>
    <name evidence="1" type="primary">murD</name>
    <name type="ordered locus">PEPE_1187</name>
</gene>
<dbReference type="EC" id="6.3.2.9" evidence="1"/>
<dbReference type="EMBL" id="CP000422">
    <property type="protein sequence ID" value="ABJ68241.1"/>
    <property type="molecule type" value="Genomic_DNA"/>
</dbReference>
<dbReference type="RefSeq" id="WP_011673543.1">
    <property type="nucleotide sequence ID" value="NC_008525.1"/>
</dbReference>
<dbReference type="SMR" id="Q03EY1"/>
<dbReference type="STRING" id="278197.PEPE_1187"/>
<dbReference type="GeneID" id="33062156"/>
<dbReference type="KEGG" id="ppe:PEPE_1187"/>
<dbReference type="eggNOG" id="COG0771">
    <property type="taxonomic scope" value="Bacteria"/>
</dbReference>
<dbReference type="HOGENOM" id="CLU_032540_0_1_9"/>
<dbReference type="OrthoDB" id="9809796at2"/>
<dbReference type="UniPathway" id="UPA00219"/>
<dbReference type="Proteomes" id="UP000000773">
    <property type="component" value="Chromosome"/>
</dbReference>
<dbReference type="GO" id="GO:0005737">
    <property type="term" value="C:cytoplasm"/>
    <property type="evidence" value="ECO:0007669"/>
    <property type="project" value="UniProtKB-SubCell"/>
</dbReference>
<dbReference type="GO" id="GO:0005524">
    <property type="term" value="F:ATP binding"/>
    <property type="evidence" value="ECO:0007669"/>
    <property type="project" value="UniProtKB-UniRule"/>
</dbReference>
<dbReference type="GO" id="GO:0008764">
    <property type="term" value="F:UDP-N-acetylmuramoylalanine-D-glutamate ligase activity"/>
    <property type="evidence" value="ECO:0007669"/>
    <property type="project" value="UniProtKB-UniRule"/>
</dbReference>
<dbReference type="GO" id="GO:0051301">
    <property type="term" value="P:cell division"/>
    <property type="evidence" value="ECO:0007669"/>
    <property type="project" value="UniProtKB-KW"/>
</dbReference>
<dbReference type="GO" id="GO:0071555">
    <property type="term" value="P:cell wall organization"/>
    <property type="evidence" value="ECO:0007669"/>
    <property type="project" value="UniProtKB-KW"/>
</dbReference>
<dbReference type="GO" id="GO:0009252">
    <property type="term" value="P:peptidoglycan biosynthetic process"/>
    <property type="evidence" value="ECO:0007669"/>
    <property type="project" value="UniProtKB-UniRule"/>
</dbReference>
<dbReference type="GO" id="GO:0008360">
    <property type="term" value="P:regulation of cell shape"/>
    <property type="evidence" value="ECO:0007669"/>
    <property type="project" value="UniProtKB-KW"/>
</dbReference>
<dbReference type="Gene3D" id="3.90.190.20">
    <property type="entry name" value="Mur ligase, C-terminal domain"/>
    <property type="match status" value="1"/>
</dbReference>
<dbReference type="Gene3D" id="3.40.1190.10">
    <property type="entry name" value="Mur-like, catalytic domain"/>
    <property type="match status" value="1"/>
</dbReference>
<dbReference type="Gene3D" id="3.40.50.720">
    <property type="entry name" value="NAD(P)-binding Rossmann-like Domain"/>
    <property type="match status" value="1"/>
</dbReference>
<dbReference type="HAMAP" id="MF_00639">
    <property type="entry name" value="MurD"/>
    <property type="match status" value="1"/>
</dbReference>
<dbReference type="InterPro" id="IPR036565">
    <property type="entry name" value="Mur-like_cat_sf"/>
</dbReference>
<dbReference type="InterPro" id="IPR004101">
    <property type="entry name" value="Mur_ligase_C"/>
</dbReference>
<dbReference type="InterPro" id="IPR036615">
    <property type="entry name" value="Mur_ligase_C_dom_sf"/>
</dbReference>
<dbReference type="InterPro" id="IPR013221">
    <property type="entry name" value="Mur_ligase_cen"/>
</dbReference>
<dbReference type="InterPro" id="IPR005762">
    <property type="entry name" value="MurD"/>
</dbReference>
<dbReference type="NCBIfam" id="TIGR01087">
    <property type="entry name" value="murD"/>
    <property type="match status" value="1"/>
</dbReference>
<dbReference type="PANTHER" id="PTHR43692">
    <property type="entry name" value="UDP-N-ACETYLMURAMOYLALANINE--D-GLUTAMATE LIGASE"/>
    <property type="match status" value="1"/>
</dbReference>
<dbReference type="PANTHER" id="PTHR43692:SF1">
    <property type="entry name" value="UDP-N-ACETYLMURAMOYLALANINE--D-GLUTAMATE LIGASE"/>
    <property type="match status" value="1"/>
</dbReference>
<dbReference type="Pfam" id="PF02875">
    <property type="entry name" value="Mur_ligase_C"/>
    <property type="match status" value="1"/>
</dbReference>
<dbReference type="Pfam" id="PF08245">
    <property type="entry name" value="Mur_ligase_M"/>
    <property type="match status" value="1"/>
</dbReference>
<dbReference type="Pfam" id="PF21799">
    <property type="entry name" value="MurD-like_N"/>
    <property type="match status" value="1"/>
</dbReference>
<dbReference type="SUPFAM" id="SSF51984">
    <property type="entry name" value="MurCD N-terminal domain"/>
    <property type="match status" value="1"/>
</dbReference>
<dbReference type="SUPFAM" id="SSF53623">
    <property type="entry name" value="MurD-like peptide ligases, catalytic domain"/>
    <property type="match status" value="1"/>
</dbReference>
<dbReference type="SUPFAM" id="SSF53244">
    <property type="entry name" value="MurD-like peptide ligases, peptide-binding domain"/>
    <property type="match status" value="1"/>
</dbReference>
<proteinExistence type="inferred from homology"/>
<evidence type="ECO:0000255" key="1">
    <source>
        <dbReference type="HAMAP-Rule" id="MF_00639"/>
    </source>
</evidence>